<keyword id="KW-0067">ATP-binding</keyword>
<keyword id="KW-0963">Cytoplasm</keyword>
<keyword id="KW-0418">Kinase</keyword>
<keyword id="KW-0545">Nucleotide biosynthesis</keyword>
<keyword id="KW-0547">Nucleotide-binding</keyword>
<keyword id="KW-0808">Transferase</keyword>
<name>KAD_PSEF5</name>
<protein>
    <recommendedName>
        <fullName evidence="1">Adenylate kinase</fullName>
        <shortName evidence="1">AK</shortName>
        <ecNumber evidence="1">2.7.4.3</ecNumber>
    </recommendedName>
    <alternativeName>
        <fullName evidence="1">ATP-AMP transphosphorylase</fullName>
    </alternativeName>
    <alternativeName>
        <fullName evidence="1">ATP:AMP phosphotransferase</fullName>
    </alternativeName>
    <alternativeName>
        <fullName evidence="1">Adenylate monophosphate kinase</fullName>
    </alternativeName>
</protein>
<sequence length="215" mass="23250">MRVILLGAPGAGKGTQAKFITEKFGIPQISTGDMLRAAVKAGTELGLKAKSVMDSGGLVSDDLIINLVKERISQADCVNGFLFDGFPRTIPQAEALVKAGVELDNVVEIAVDDEEIVQRIAGRRVHEASGRVYHTVYNPPKIAGKDDITGEDLVQRKDDTEETVRHRLSVYHSQTKPLVEFYQQLAATQGKPKYSHIPGVGSVEVITGKVLEALS</sequence>
<comment type="function">
    <text evidence="1">Catalyzes the reversible transfer of the terminal phosphate group between ATP and AMP. Plays an important role in cellular energy homeostasis and in adenine nucleotide metabolism.</text>
</comment>
<comment type="catalytic activity">
    <reaction evidence="1">
        <text>AMP + ATP = 2 ADP</text>
        <dbReference type="Rhea" id="RHEA:12973"/>
        <dbReference type="ChEBI" id="CHEBI:30616"/>
        <dbReference type="ChEBI" id="CHEBI:456215"/>
        <dbReference type="ChEBI" id="CHEBI:456216"/>
        <dbReference type="EC" id="2.7.4.3"/>
    </reaction>
</comment>
<comment type="pathway">
    <text evidence="1">Purine metabolism; AMP biosynthesis via salvage pathway; AMP from ADP: step 1/1.</text>
</comment>
<comment type="subunit">
    <text evidence="1">Monomer.</text>
</comment>
<comment type="subcellular location">
    <subcellularLocation>
        <location evidence="1">Cytoplasm</location>
    </subcellularLocation>
</comment>
<comment type="domain">
    <text evidence="1">Consists of three domains, a large central CORE domain and two small peripheral domains, NMPbind and LID, which undergo movements during catalysis. The LID domain closes over the site of phosphoryl transfer upon ATP binding. Assembling and dissambling the active center during each catalytic cycle provides an effective means to prevent ATP hydrolysis.</text>
</comment>
<comment type="similarity">
    <text evidence="1">Belongs to the adenylate kinase family.</text>
</comment>
<organism>
    <name type="scientific">Pseudomonas fluorescens (strain ATCC BAA-477 / NRRL B-23932 / Pf-5)</name>
    <dbReference type="NCBI Taxonomy" id="220664"/>
    <lineage>
        <taxon>Bacteria</taxon>
        <taxon>Pseudomonadati</taxon>
        <taxon>Pseudomonadota</taxon>
        <taxon>Gammaproteobacteria</taxon>
        <taxon>Pseudomonadales</taxon>
        <taxon>Pseudomonadaceae</taxon>
        <taxon>Pseudomonas</taxon>
    </lineage>
</organism>
<feature type="chain" id="PRO_1000058883" description="Adenylate kinase">
    <location>
        <begin position="1"/>
        <end position="215"/>
    </location>
</feature>
<feature type="region of interest" description="NMP" evidence="1">
    <location>
        <begin position="30"/>
        <end position="59"/>
    </location>
</feature>
<feature type="region of interest" description="LID" evidence="1">
    <location>
        <begin position="122"/>
        <end position="159"/>
    </location>
</feature>
<feature type="binding site" evidence="1">
    <location>
        <begin position="10"/>
        <end position="15"/>
    </location>
    <ligand>
        <name>ATP</name>
        <dbReference type="ChEBI" id="CHEBI:30616"/>
    </ligand>
</feature>
<feature type="binding site" evidence="1">
    <location>
        <position position="31"/>
    </location>
    <ligand>
        <name>AMP</name>
        <dbReference type="ChEBI" id="CHEBI:456215"/>
    </ligand>
</feature>
<feature type="binding site" evidence="1">
    <location>
        <position position="36"/>
    </location>
    <ligand>
        <name>AMP</name>
        <dbReference type="ChEBI" id="CHEBI:456215"/>
    </ligand>
</feature>
<feature type="binding site" evidence="1">
    <location>
        <begin position="57"/>
        <end position="59"/>
    </location>
    <ligand>
        <name>AMP</name>
        <dbReference type="ChEBI" id="CHEBI:456215"/>
    </ligand>
</feature>
<feature type="binding site" evidence="1">
    <location>
        <begin position="85"/>
        <end position="88"/>
    </location>
    <ligand>
        <name>AMP</name>
        <dbReference type="ChEBI" id="CHEBI:456215"/>
    </ligand>
</feature>
<feature type="binding site" evidence="1">
    <location>
        <position position="92"/>
    </location>
    <ligand>
        <name>AMP</name>
        <dbReference type="ChEBI" id="CHEBI:456215"/>
    </ligand>
</feature>
<feature type="binding site" evidence="1">
    <location>
        <position position="123"/>
    </location>
    <ligand>
        <name>ATP</name>
        <dbReference type="ChEBI" id="CHEBI:30616"/>
    </ligand>
</feature>
<feature type="binding site" evidence="1">
    <location>
        <begin position="132"/>
        <end position="133"/>
    </location>
    <ligand>
        <name>ATP</name>
        <dbReference type="ChEBI" id="CHEBI:30616"/>
    </ligand>
</feature>
<feature type="binding site" evidence="1">
    <location>
        <position position="156"/>
    </location>
    <ligand>
        <name>AMP</name>
        <dbReference type="ChEBI" id="CHEBI:456215"/>
    </ligand>
</feature>
<feature type="binding site" evidence="1">
    <location>
        <position position="167"/>
    </location>
    <ligand>
        <name>AMP</name>
        <dbReference type="ChEBI" id="CHEBI:456215"/>
    </ligand>
</feature>
<feature type="binding site" evidence="1">
    <location>
        <position position="201"/>
    </location>
    <ligand>
        <name>ATP</name>
        <dbReference type="ChEBI" id="CHEBI:30616"/>
    </ligand>
</feature>
<reference key="1">
    <citation type="journal article" date="2005" name="Nat. Biotechnol.">
        <title>Complete genome sequence of the plant commensal Pseudomonas fluorescens Pf-5.</title>
        <authorList>
            <person name="Paulsen I.T."/>
            <person name="Press C.M."/>
            <person name="Ravel J."/>
            <person name="Kobayashi D.Y."/>
            <person name="Myers G.S.A."/>
            <person name="Mavrodi D.V."/>
            <person name="DeBoy R.T."/>
            <person name="Seshadri R."/>
            <person name="Ren Q."/>
            <person name="Madupu R."/>
            <person name="Dodson R.J."/>
            <person name="Durkin A.S."/>
            <person name="Brinkac L.M."/>
            <person name="Daugherty S.C."/>
            <person name="Sullivan S.A."/>
            <person name="Rosovitz M.J."/>
            <person name="Gwinn M.L."/>
            <person name="Zhou L."/>
            <person name="Schneider D.J."/>
            <person name="Cartinhour S.W."/>
            <person name="Nelson W.C."/>
            <person name="Weidman J."/>
            <person name="Watkins K."/>
            <person name="Tran K."/>
            <person name="Khouri H."/>
            <person name="Pierson E.A."/>
            <person name="Pierson L.S. III"/>
            <person name="Thomashow L.S."/>
            <person name="Loper J.E."/>
        </authorList>
    </citation>
    <scope>NUCLEOTIDE SEQUENCE [LARGE SCALE GENOMIC DNA]</scope>
    <source>
        <strain>ATCC BAA-477 / NRRL B-23932 / Pf-5</strain>
    </source>
</reference>
<evidence type="ECO:0000255" key="1">
    <source>
        <dbReference type="HAMAP-Rule" id="MF_00235"/>
    </source>
</evidence>
<accession>Q4KHK4</accession>
<proteinExistence type="inferred from homology"/>
<gene>
    <name evidence="1" type="primary">adk</name>
    <name type="ordered locus">PFL_1148</name>
</gene>
<dbReference type="EC" id="2.7.4.3" evidence="1"/>
<dbReference type="EMBL" id="CP000076">
    <property type="protein sequence ID" value="AAY90435.1"/>
    <property type="molecule type" value="Genomic_DNA"/>
</dbReference>
<dbReference type="RefSeq" id="WP_011059496.1">
    <property type="nucleotide sequence ID" value="NC_004129.6"/>
</dbReference>
<dbReference type="SMR" id="Q4KHK4"/>
<dbReference type="STRING" id="220664.PFL_1148"/>
<dbReference type="KEGG" id="pfl:PFL_1148"/>
<dbReference type="PATRIC" id="fig|220664.5.peg.1179"/>
<dbReference type="eggNOG" id="COG0563">
    <property type="taxonomic scope" value="Bacteria"/>
</dbReference>
<dbReference type="HOGENOM" id="CLU_032354_1_2_6"/>
<dbReference type="UniPathway" id="UPA00588">
    <property type="reaction ID" value="UER00649"/>
</dbReference>
<dbReference type="Proteomes" id="UP000008540">
    <property type="component" value="Chromosome"/>
</dbReference>
<dbReference type="GO" id="GO:0005737">
    <property type="term" value="C:cytoplasm"/>
    <property type="evidence" value="ECO:0007669"/>
    <property type="project" value="UniProtKB-SubCell"/>
</dbReference>
<dbReference type="GO" id="GO:0004017">
    <property type="term" value="F:adenylate kinase activity"/>
    <property type="evidence" value="ECO:0007669"/>
    <property type="project" value="UniProtKB-UniRule"/>
</dbReference>
<dbReference type="GO" id="GO:0005524">
    <property type="term" value="F:ATP binding"/>
    <property type="evidence" value="ECO:0007669"/>
    <property type="project" value="UniProtKB-UniRule"/>
</dbReference>
<dbReference type="GO" id="GO:0044209">
    <property type="term" value="P:AMP salvage"/>
    <property type="evidence" value="ECO:0007669"/>
    <property type="project" value="UniProtKB-UniRule"/>
</dbReference>
<dbReference type="CDD" id="cd01428">
    <property type="entry name" value="ADK"/>
    <property type="match status" value="1"/>
</dbReference>
<dbReference type="FunFam" id="3.40.50.300:FF:000106">
    <property type="entry name" value="Adenylate kinase mitochondrial"/>
    <property type="match status" value="1"/>
</dbReference>
<dbReference type="Gene3D" id="3.40.50.300">
    <property type="entry name" value="P-loop containing nucleotide triphosphate hydrolases"/>
    <property type="match status" value="1"/>
</dbReference>
<dbReference type="HAMAP" id="MF_00235">
    <property type="entry name" value="Adenylate_kinase_Adk"/>
    <property type="match status" value="1"/>
</dbReference>
<dbReference type="InterPro" id="IPR006259">
    <property type="entry name" value="Adenyl_kin_sub"/>
</dbReference>
<dbReference type="InterPro" id="IPR000850">
    <property type="entry name" value="Adenylat/UMP-CMP_kin"/>
</dbReference>
<dbReference type="InterPro" id="IPR033690">
    <property type="entry name" value="Adenylat_kinase_CS"/>
</dbReference>
<dbReference type="InterPro" id="IPR007862">
    <property type="entry name" value="Adenylate_kinase_lid-dom"/>
</dbReference>
<dbReference type="InterPro" id="IPR027417">
    <property type="entry name" value="P-loop_NTPase"/>
</dbReference>
<dbReference type="NCBIfam" id="TIGR01351">
    <property type="entry name" value="adk"/>
    <property type="match status" value="1"/>
</dbReference>
<dbReference type="NCBIfam" id="NF001379">
    <property type="entry name" value="PRK00279.1-1"/>
    <property type="match status" value="1"/>
</dbReference>
<dbReference type="NCBIfam" id="NF001380">
    <property type="entry name" value="PRK00279.1-2"/>
    <property type="match status" value="1"/>
</dbReference>
<dbReference type="NCBIfam" id="NF001381">
    <property type="entry name" value="PRK00279.1-3"/>
    <property type="match status" value="1"/>
</dbReference>
<dbReference type="NCBIfam" id="NF011100">
    <property type="entry name" value="PRK14527.1"/>
    <property type="match status" value="1"/>
</dbReference>
<dbReference type="PANTHER" id="PTHR23359">
    <property type="entry name" value="NUCLEOTIDE KINASE"/>
    <property type="match status" value="1"/>
</dbReference>
<dbReference type="Pfam" id="PF00406">
    <property type="entry name" value="ADK"/>
    <property type="match status" value="1"/>
</dbReference>
<dbReference type="Pfam" id="PF05191">
    <property type="entry name" value="ADK_lid"/>
    <property type="match status" value="1"/>
</dbReference>
<dbReference type="PRINTS" id="PR00094">
    <property type="entry name" value="ADENYLTKNASE"/>
</dbReference>
<dbReference type="SUPFAM" id="SSF52540">
    <property type="entry name" value="P-loop containing nucleoside triphosphate hydrolases"/>
    <property type="match status" value="1"/>
</dbReference>
<dbReference type="PROSITE" id="PS00113">
    <property type="entry name" value="ADENYLATE_KINASE"/>
    <property type="match status" value="1"/>
</dbReference>